<proteinExistence type="inferred from homology"/>
<feature type="chain" id="PRO_0000331082" description="SsrA-binding protein">
    <location>
        <begin position="1"/>
        <end position="161"/>
    </location>
</feature>
<protein>
    <recommendedName>
        <fullName evidence="1">SsrA-binding protein</fullName>
    </recommendedName>
    <alternativeName>
        <fullName evidence="1">Small protein B</fullName>
    </alternativeName>
</protein>
<gene>
    <name evidence="1" type="primary">smpB</name>
    <name type="ordered locus">Ping_1602</name>
</gene>
<reference key="1">
    <citation type="journal article" date="2008" name="BMC Genomics">
        <title>Genomics of an extreme psychrophile, Psychromonas ingrahamii.</title>
        <authorList>
            <person name="Riley M."/>
            <person name="Staley J.T."/>
            <person name="Danchin A."/>
            <person name="Wang T.Z."/>
            <person name="Brettin T.S."/>
            <person name="Hauser L.J."/>
            <person name="Land M.L."/>
            <person name="Thompson L.S."/>
        </authorList>
    </citation>
    <scope>NUCLEOTIDE SEQUENCE [LARGE SCALE GENOMIC DNA]</scope>
    <source>
        <strain>DSM 17664 / CCUG 51855 / 37</strain>
    </source>
</reference>
<sequence length="161" mass="18746">MAKKNSKTKNNDNTIARNKRASHDYHLEERFEAGLELQGWEVKSLRAGKANIADSYIFLKNGEAWLLGATFPPLLVASSHVVCDPMRYRKLLLNRRELDNLVGKVERQGYSIIPISLYWKHAWVKISFALAKGKQEHDKRADVKDREWKVDKERMMKHSVR</sequence>
<organism>
    <name type="scientific">Psychromonas ingrahamii (strain DSM 17664 / CCUG 51855 / 37)</name>
    <dbReference type="NCBI Taxonomy" id="357804"/>
    <lineage>
        <taxon>Bacteria</taxon>
        <taxon>Pseudomonadati</taxon>
        <taxon>Pseudomonadota</taxon>
        <taxon>Gammaproteobacteria</taxon>
        <taxon>Alteromonadales</taxon>
        <taxon>Psychromonadaceae</taxon>
        <taxon>Psychromonas</taxon>
    </lineage>
</organism>
<keyword id="KW-0963">Cytoplasm</keyword>
<keyword id="KW-1185">Reference proteome</keyword>
<keyword id="KW-0694">RNA-binding</keyword>
<dbReference type="EMBL" id="CP000510">
    <property type="protein sequence ID" value="ABM03399.1"/>
    <property type="molecule type" value="Genomic_DNA"/>
</dbReference>
<dbReference type="RefSeq" id="WP_011769959.1">
    <property type="nucleotide sequence ID" value="NC_008709.1"/>
</dbReference>
<dbReference type="SMR" id="A1SV84"/>
<dbReference type="STRING" id="357804.Ping_1602"/>
<dbReference type="KEGG" id="pin:Ping_1602"/>
<dbReference type="eggNOG" id="COG0691">
    <property type="taxonomic scope" value="Bacteria"/>
</dbReference>
<dbReference type="HOGENOM" id="CLU_108953_3_0_6"/>
<dbReference type="OrthoDB" id="9805462at2"/>
<dbReference type="Proteomes" id="UP000000639">
    <property type="component" value="Chromosome"/>
</dbReference>
<dbReference type="GO" id="GO:0005829">
    <property type="term" value="C:cytosol"/>
    <property type="evidence" value="ECO:0007669"/>
    <property type="project" value="TreeGrafter"/>
</dbReference>
<dbReference type="GO" id="GO:0003723">
    <property type="term" value="F:RNA binding"/>
    <property type="evidence" value="ECO:0007669"/>
    <property type="project" value="UniProtKB-UniRule"/>
</dbReference>
<dbReference type="GO" id="GO:0070929">
    <property type="term" value="P:trans-translation"/>
    <property type="evidence" value="ECO:0007669"/>
    <property type="project" value="UniProtKB-UniRule"/>
</dbReference>
<dbReference type="CDD" id="cd09294">
    <property type="entry name" value="SmpB"/>
    <property type="match status" value="1"/>
</dbReference>
<dbReference type="Gene3D" id="2.40.280.10">
    <property type="match status" value="1"/>
</dbReference>
<dbReference type="HAMAP" id="MF_00023">
    <property type="entry name" value="SmpB"/>
    <property type="match status" value="1"/>
</dbReference>
<dbReference type="InterPro" id="IPR023620">
    <property type="entry name" value="SmpB"/>
</dbReference>
<dbReference type="InterPro" id="IPR000037">
    <property type="entry name" value="SsrA-bd_prot"/>
</dbReference>
<dbReference type="InterPro" id="IPR020081">
    <property type="entry name" value="SsrA-bd_prot_CS"/>
</dbReference>
<dbReference type="NCBIfam" id="NF003843">
    <property type="entry name" value="PRK05422.1"/>
    <property type="match status" value="1"/>
</dbReference>
<dbReference type="NCBIfam" id="TIGR00086">
    <property type="entry name" value="smpB"/>
    <property type="match status" value="1"/>
</dbReference>
<dbReference type="PANTHER" id="PTHR30308:SF2">
    <property type="entry name" value="SSRA-BINDING PROTEIN"/>
    <property type="match status" value="1"/>
</dbReference>
<dbReference type="PANTHER" id="PTHR30308">
    <property type="entry name" value="TMRNA-BINDING COMPONENT OF TRANS-TRANSLATION TAGGING COMPLEX"/>
    <property type="match status" value="1"/>
</dbReference>
<dbReference type="Pfam" id="PF01668">
    <property type="entry name" value="SmpB"/>
    <property type="match status" value="1"/>
</dbReference>
<dbReference type="SUPFAM" id="SSF74982">
    <property type="entry name" value="Small protein B (SmpB)"/>
    <property type="match status" value="1"/>
</dbReference>
<dbReference type="PROSITE" id="PS01317">
    <property type="entry name" value="SSRP"/>
    <property type="match status" value="1"/>
</dbReference>
<accession>A1SV84</accession>
<name>SSRP_PSYIN</name>
<comment type="function">
    <text evidence="1">Required for rescue of stalled ribosomes mediated by trans-translation. Binds to transfer-messenger RNA (tmRNA), required for stable association of tmRNA with ribosomes. tmRNA and SmpB together mimic tRNA shape, replacing the anticodon stem-loop with SmpB. tmRNA is encoded by the ssrA gene; the 2 termini fold to resemble tRNA(Ala) and it encodes a 'tag peptide', a short internal open reading frame. During trans-translation Ala-aminoacylated tmRNA acts like a tRNA, entering the A-site of stalled ribosomes, displacing the stalled mRNA. The ribosome then switches to translate the ORF on the tmRNA; the nascent peptide is terminated with the 'tag peptide' encoded by the tmRNA and targeted for degradation. The ribosome is freed to recommence translation, which seems to be the essential function of trans-translation.</text>
</comment>
<comment type="subcellular location">
    <subcellularLocation>
        <location evidence="1">Cytoplasm</location>
    </subcellularLocation>
    <text evidence="1">The tmRNA-SmpB complex associates with stalled 70S ribosomes.</text>
</comment>
<comment type="similarity">
    <text evidence="1">Belongs to the SmpB family.</text>
</comment>
<evidence type="ECO:0000255" key="1">
    <source>
        <dbReference type="HAMAP-Rule" id="MF_00023"/>
    </source>
</evidence>